<organismHost>
    <name type="scientific">Mammalia</name>
    <dbReference type="NCBI Taxonomy" id="40674"/>
</organismHost>
<proteinExistence type="inferred from homology"/>
<sequence>MARAAFLFKTVGFGGLQNVPINDELASHLLRAGNSPWQLTQFLDWISLGRGLATSALVPTAGSRYYQMSCLLSGTLQIPFRPNHRWGDVRFLRLVWSAPTLDGLVIAPPPILAQPAIQAQADRAYDCDDYPFLARDPRFKHRVYQQLSAITLLNLTGFGPISYVRVDEDMWSGDVSQLLMNYFGHTFAEIAYTLCQASANRPWEHDGTYARMTQIVLSLFWLSYVGVIHQHNTYRTFYFQCNRRGDAAEVWILSCSLTHSAQIRAGNRSLFVMPTSPDWNMDVNLILSSTLTGCLCSGSQLPLIDNNSVPNVSRNIHGWTGRGGNQLHGFQVRRMITEYCDRLRRDGVMTPAQQMQIEALGDQTQQFKRDKLEAWALEDDQYNRAHPNSTMFRTKPFTNAQWGRGNTAATSAAIAALI</sequence>
<feature type="chain" id="PRO_0000222750" description="Inner capsid protein sigma-2">
    <location>
        <begin position="1"/>
        <end position="418"/>
    </location>
</feature>
<accession>P32922</accession>
<comment type="function">
    <text>Inner capsid (core) component.</text>
</comment>
<comment type="subunit">
    <text evidence="1">Interacts with protein mu-NS; in viral inclusions.</text>
</comment>
<comment type="subcellular location">
    <subcellularLocation>
        <location evidence="2">Virion</location>
    </subcellularLocation>
    <text>Found in the inner capsid (150 copies).</text>
</comment>
<comment type="similarity">
    <text evidence="2">Belongs to the orthoreovirus sigma-1 protein family.</text>
</comment>
<gene>
    <name type="primary">S2</name>
</gene>
<protein>
    <recommendedName>
        <fullName>Inner capsid protein sigma-2</fullName>
        <shortName>Sigma2</shortName>
    </recommendedName>
</protein>
<dbReference type="EMBL" id="L19775">
    <property type="protein sequence ID" value="AAA47248.1"/>
    <property type="molecule type" value="Genomic_RNA"/>
</dbReference>
<dbReference type="PIR" id="B41306">
    <property type="entry name" value="FOXRJS"/>
</dbReference>
<dbReference type="SMR" id="P32922"/>
<dbReference type="Proteomes" id="UP000006370">
    <property type="component" value="Genome"/>
</dbReference>
<dbReference type="GO" id="GO:0039625">
    <property type="term" value="C:viral inner capsid"/>
    <property type="evidence" value="ECO:0007669"/>
    <property type="project" value="UniProtKB-KW"/>
</dbReference>
<dbReference type="Gene3D" id="1.10.287.1520">
    <property type="match status" value="1"/>
</dbReference>
<dbReference type="InterPro" id="IPR004317">
    <property type="entry name" value="Sigma_1_2_reovir"/>
</dbReference>
<dbReference type="Pfam" id="PF03084">
    <property type="entry name" value="Sigma_1_2"/>
    <property type="match status" value="1"/>
</dbReference>
<organism>
    <name type="scientific">Reovirus type 2 (strain D5/Jones)</name>
    <name type="common">T2J</name>
    <name type="synonym">Mammalian orthoreovirus 2</name>
    <dbReference type="NCBI Taxonomy" id="10885"/>
    <lineage>
        <taxon>Viruses</taxon>
        <taxon>Riboviria</taxon>
        <taxon>Orthornavirae</taxon>
        <taxon>Duplornaviricota</taxon>
        <taxon>Resentoviricetes</taxon>
        <taxon>Reovirales</taxon>
        <taxon>Spinareoviridae</taxon>
        <taxon>Orthoreovirus</taxon>
        <taxon>Mammalian orthoreovirus</taxon>
    </lineage>
</organism>
<reference key="1">
    <citation type="journal article" date="1991" name="J. Virol.">
        <title>The S2 gene nucleotide sequences of prototype strains of the three reovirus serotypes: characterization of reovirus core protein sigma 2.</title>
        <authorList>
            <person name="Dermody T.S."/>
            <person name="Schiff L.A."/>
            <person name="Nibert M.L."/>
            <person name="Coombs K.M."/>
            <person name="Fields B.N."/>
        </authorList>
    </citation>
    <scope>NUCLEOTIDE SEQUENCE [GENOMIC RNA]</scope>
</reference>
<name>SIGM2_REOVJ</name>
<keyword id="KW-0167">Capsid protein</keyword>
<keyword id="KW-1153">Inner capsid protein</keyword>
<keyword id="KW-0946">Virion</keyword>
<evidence type="ECO:0000250" key="1"/>
<evidence type="ECO:0000305" key="2"/>